<accession>P26287</accession>
<dbReference type="EMBL" id="X58532">
    <property type="protein sequence ID" value="CAA41423.1"/>
    <property type="molecule type" value="Genomic_DNA"/>
</dbReference>
<dbReference type="EMBL" id="BA000022">
    <property type="protein sequence ID" value="BAA17627.1"/>
    <property type="molecule type" value="Genomic_DNA"/>
</dbReference>
<dbReference type="PIR" id="S16573">
    <property type="entry name" value="S16573"/>
</dbReference>
<dbReference type="PDB" id="7R0W">
    <property type="method" value="EM"/>
    <property type="resolution" value="2.80 A"/>
    <property type="chains" value="C/K=1-328"/>
</dbReference>
<dbReference type="PDB" id="7ZXY">
    <property type="method" value="EM"/>
    <property type="resolution" value="3.15 A"/>
    <property type="chains" value="C/K=45-328"/>
</dbReference>
<dbReference type="PDBsum" id="7R0W"/>
<dbReference type="PDBsum" id="7ZXY"/>
<dbReference type="EMDB" id="EMD-14224"/>
<dbReference type="EMDB" id="EMD-15017"/>
<dbReference type="SMR" id="P26287"/>
<dbReference type="IntAct" id="P26287">
    <property type="interactions" value="10"/>
</dbReference>
<dbReference type="STRING" id="1148.gene:10498494"/>
<dbReference type="TCDB" id="3.D.3.5.1">
    <property type="family name" value="the proton-translocating quinol:cytochrome c reductase (qcr) superfamily"/>
</dbReference>
<dbReference type="PaxDb" id="1148-1652707"/>
<dbReference type="EnsemblBacteria" id="BAA17627">
    <property type="protein sequence ID" value="BAA17627"/>
    <property type="gene ID" value="BAA17627"/>
</dbReference>
<dbReference type="KEGG" id="syn:sll1317"/>
<dbReference type="eggNOG" id="COG3258">
    <property type="taxonomic scope" value="Bacteria"/>
</dbReference>
<dbReference type="InParanoid" id="P26287"/>
<dbReference type="Proteomes" id="UP000001425">
    <property type="component" value="Chromosome"/>
</dbReference>
<dbReference type="GO" id="GO:0009512">
    <property type="term" value="C:cytochrome b6f complex"/>
    <property type="evidence" value="ECO:0000314"/>
    <property type="project" value="UniProtKB"/>
</dbReference>
<dbReference type="GO" id="GO:0031676">
    <property type="term" value="C:plasma membrane-derived thylakoid membrane"/>
    <property type="evidence" value="ECO:0007669"/>
    <property type="project" value="UniProtKB-SubCell"/>
</dbReference>
<dbReference type="GO" id="GO:0009055">
    <property type="term" value="F:electron transfer activity"/>
    <property type="evidence" value="ECO:0007669"/>
    <property type="project" value="UniProtKB-UniRule"/>
</dbReference>
<dbReference type="GO" id="GO:0020037">
    <property type="term" value="F:heme binding"/>
    <property type="evidence" value="ECO:0007669"/>
    <property type="project" value="InterPro"/>
</dbReference>
<dbReference type="GO" id="GO:0005506">
    <property type="term" value="F:iron ion binding"/>
    <property type="evidence" value="ECO:0007669"/>
    <property type="project" value="InterPro"/>
</dbReference>
<dbReference type="GO" id="GO:0015979">
    <property type="term" value="P:photosynthesis"/>
    <property type="evidence" value="ECO:0007669"/>
    <property type="project" value="UniProtKB-UniRule"/>
</dbReference>
<dbReference type="FunFam" id="2.60.40.830:FF:000001">
    <property type="entry name" value="Cytochrome f"/>
    <property type="match status" value="1"/>
</dbReference>
<dbReference type="Gene3D" id="2.40.50.100">
    <property type="match status" value="1"/>
</dbReference>
<dbReference type="Gene3D" id="2.60.40.830">
    <property type="entry name" value="Cytochrome f large domain"/>
    <property type="match status" value="1"/>
</dbReference>
<dbReference type="Gene3D" id="1.20.5.700">
    <property type="entry name" value="Single helix bin"/>
    <property type="match status" value="1"/>
</dbReference>
<dbReference type="HAMAP" id="MF_00610">
    <property type="entry name" value="Cytb6_f_cytF"/>
    <property type="match status" value="1"/>
</dbReference>
<dbReference type="InterPro" id="IPR024058">
    <property type="entry name" value="Cyt-f_TM"/>
</dbReference>
<dbReference type="InterPro" id="IPR002325">
    <property type="entry name" value="Cyt_f"/>
</dbReference>
<dbReference type="InterPro" id="IPR024094">
    <property type="entry name" value="Cyt_f_lg_dom"/>
</dbReference>
<dbReference type="InterPro" id="IPR036826">
    <property type="entry name" value="Cyt_f_lg_dom_sf"/>
</dbReference>
<dbReference type="InterPro" id="IPR011054">
    <property type="entry name" value="Rudment_hybrid_motif"/>
</dbReference>
<dbReference type="NCBIfam" id="NF002736">
    <property type="entry name" value="PRK02693.1"/>
    <property type="match status" value="1"/>
</dbReference>
<dbReference type="PANTHER" id="PTHR33288">
    <property type="match status" value="1"/>
</dbReference>
<dbReference type="PANTHER" id="PTHR33288:SF10">
    <property type="entry name" value="CYTOCHROME F"/>
    <property type="match status" value="1"/>
</dbReference>
<dbReference type="Pfam" id="PF01333">
    <property type="entry name" value="Apocytochr_F_C"/>
    <property type="match status" value="1"/>
</dbReference>
<dbReference type="Pfam" id="PF16639">
    <property type="entry name" value="Apocytochr_F_N"/>
    <property type="match status" value="1"/>
</dbReference>
<dbReference type="PRINTS" id="PR00610">
    <property type="entry name" value="CYTOCHROMEF"/>
</dbReference>
<dbReference type="SUPFAM" id="SSF103431">
    <property type="entry name" value="Cytochrome f subunit of the cytochrome b6f complex, transmembrane anchor"/>
    <property type="match status" value="1"/>
</dbReference>
<dbReference type="SUPFAM" id="SSF49441">
    <property type="entry name" value="Cytochrome f, large domain"/>
    <property type="match status" value="1"/>
</dbReference>
<dbReference type="SUPFAM" id="SSF51246">
    <property type="entry name" value="Rudiment single hybrid motif"/>
    <property type="match status" value="1"/>
</dbReference>
<dbReference type="PROSITE" id="PS51010">
    <property type="entry name" value="CYTF"/>
    <property type="match status" value="1"/>
</dbReference>
<comment type="function">
    <text evidence="1">Component of the cytochrome b6-f complex, which mediates electron transfer between photosystem II (PSII) and photosystem I (PSI), cyclic electron flow around PSI, and state transitions.</text>
</comment>
<comment type="cofactor">
    <cofactor evidence="1">
        <name>heme</name>
        <dbReference type="ChEBI" id="CHEBI:30413"/>
    </cofactor>
    <text evidence="1">Binds 1 heme group covalently.</text>
</comment>
<comment type="subunit">
    <text evidence="1">The 4 large subunits of the cytochrome b6-f complex are cytochrome b6, subunit IV (17 kDa polypeptide, PetD), cytochrome f and the Rieske protein, while the 4 small subunits are PetG, PetL, PetM and PetN. The complex functions as a dimer (By similarity).</text>
</comment>
<comment type="subcellular location">
    <subcellularLocation>
        <location evidence="1">Cellular thylakoid membrane</location>
        <topology evidence="1">Single-pass membrane protein</topology>
    </subcellularLocation>
</comment>
<comment type="similarity">
    <text evidence="3">Belongs to the cytochrome f family.</text>
</comment>
<sequence length="328" mass="35231">MRNPDTLGLWTKTMVALRRFTVLAIATVSVFLITDLGLPQAASAYPFWAQETAPLTPREATGRIVCANCHLAQKAAEVEIPQAVLPDTVFEAVVKIPYDLDSQQVLGDGSKGGLNVGAVLMLPEGFKIAPPDRLSEGLKEKVGGTYFQPYREDMENVVIVGPLPGEQYQEIVFPVLSPDPAKDKSINYGKFAVHLGANRGRGQIYPTGLLSNNNAFKAPNAGTISEVNALEAGGYQLILTTADGTETVDIPAGPELIVSAGQTVEAGEFLTNNPNVGGFGQKDTEVVLQNPTRIKFLVLFLAGIMLSQILLVLKKKQIEKVQAAELNF</sequence>
<proteinExistence type="evidence at protein level"/>
<reference key="1">
    <citation type="journal article" date="1991" name="Plant Mol. Biol.">
        <title>Primary structure of the psbN-psbH-petC-petA gene cluster of the cyanobacterium Synechocystis PCC 6803.</title>
        <authorList>
            <person name="Mayes S.R."/>
            <person name="Barber J."/>
        </authorList>
    </citation>
    <scope>NUCLEOTIDE SEQUENCE [GENOMIC DNA]</scope>
</reference>
<reference key="2">
    <citation type="journal article" date="1996" name="DNA Res.">
        <title>Sequence analysis of the genome of the unicellular cyanobacterium Synechocystis sp. strain PCC6803. II. Sequence determination of the entire genome and assignment of potential protein-coding regions.</title>
        <authorList>
            <person name="Kaneko T."/>
            <person name="Sato S."/>
            <person name="Kotani H."/>
            <person name="Tanaka A."/>
            <person name="Asamizu E."/>
            <person name="Nakamura Y."/>
            <person name="Miyajima N."/>
            <person name="Hirosawa M."/>
            <person name="Sugiura M."/>
            <person name="Sasamoto S."/>
            <person name="Kimura T."/>
            <person name="Hosouchi T."/>
            <person name="Matsuno A."/>
            <person name="Muraki A."/>
            <person name="Nakazaki N."/>
            <person name="Naruo K."/>
            <person name="Okumura S."/>
            <person name="Shimpo S."/>
            <person name="Takeuchi C."/>
            <person name="Wada T."/>
            <person name="Watanabe A."/>
            <person name="Yamada M."/>
            <person name="Yasuda M."/>
            <person name="Tabata S."/>
        </authorList>
    </citation>
    <scope>NUCLEOTIDE SEQUENCE [LARGE SCALE GENOMIC DNA]</scope>
    <source>
        <strain>ATCC 27184 / PCC 6803 / Kazusa</strain>
    </source>
</reference>
<keyword id="KW-0002">3D-structure</keyword>
<keyword id="KW-0249">Electron transport</keyword>
<keyword id="KW-0349">Heme</keyword>
<keyword id="KW-0408">Iron</keyword>
<keyword id="KW-0472">Membrane</keyword>
<keyword id="KW-0479">Metal-binding</keyword>
<keyword id="KW-0602">Photosynthesis</keyword>
<keyword id="KW-1185">Reference proteome</keyword>
<keyword id="KW-0732">Signal</keyword>
<keyword id="KW-0793">Thylakoid</keyword>
<keyword id="KW-0812">Transmembrane</keyword>
<keyword id="KW-1133">Transmembrane helix</keyword>
<keyword id="KW-0813">Transport</keyword>
<gene>
    <name type="primary">petA</name>
    <name type="ordered locus">sll1317</name>
</gene>
<organism>
    <name type="scientific">Synechocystis sp. (strain ATCC 27184 / PCC 6803 / Kazusa)</name>
    <dbReference type="NCBI Taxonomy" id="1111708"/>
    <lineage>
        <taxon>Bacteria</taxon>
        <taxon>Bacillati</taxon>
        <taxon>Cyanobacteriota</taxon>
        <taxon>Cyanophyceae</taxon>
        <taxon>Synechococcales</taxon>
        <taxon>Merismopediaceae</taxon>
        <taxon>Synechocystis</taxon>
    </lineage>
</organism>
<protein>
    <recommendedName>
        <fullName>Cytochrome f</fullName>
    </recommendedName>
</protein>
<name>CYF_SYNY3</name>
<feature type="signal peptide" evidence="1">
    <location>
        <begin position="1"/>
        <end position="44"/>
    </location>
</feature>
<feature type="chain" id="PRO_0000023848" description="Cytochrome f">
    <location>
        <begin position="45"/>
        <end position="328"/>
    </location>
</feature>
<feature type="transmembrane region" description="Helical" evidence="2">
    <location>
        <begin position="296"/>
        <end position="313"/>
    </location>
</feature>
<feature type="binding site" description="axial binding residue" evidence="1">
    <location>
        <position position="45"/>
    </location>
    <ligand>
        <name>heme</name>
        <dbReference type="ChEBI" id="CHEBI:30413"/>
    </ligand>
    <ligandPart>
        <name>Fe</name>
        <dbReference type="ChEBI" id="CHEBI:18248"/>
    </ligandPart>
</feature>
<feature type="binding site" description="covalent" evidence="1">
    <location>
        <position position="66"/>
    </location>
    <ligand>
        <name>heme</name>
        <dbReference type="ChEBI" id="CHEBI:30413"/>
    </ligand>
</feature>
<feature type="binding site" description="covalent" evidence="1">
    <location>
        <position position="69"/>
    </location>
    <ligand>
        <name>heme</name>
        <dbReference type="ChEBI" id="CHEBI:30413"/>
    </ligand>
</feature>
<feature type="binding site" description="axial binding residue" evidence="1">
    <location>
        <position position="70"/>
    </location>
    <ligand>
        <name>heme</name>
        <dbReference type="ChEBI" id="CHEBI:30413"/>
    </ligand>
    <ligandPart>
        <name>Fe</name>
        <dbReference type="ChEBI" id="CHEBI:18248"/>
    </ligandPart>
</feature>
<feature type="helix" evidence="4">
    <location>
        <begin position="47"/>
        <end position="52"/>
    </location>
</feature>
<feature type="strand" evidence="5">
    <location>
        <begin position="53"/>
        <end position="55"/>
    </location>
</feature>
<feature type="helix" evidence="4">
    <location>
        <begin position="65"/>
        <end position="68"/>
    </location>
</feature>
<feature type="strand" evidence="4">
    <location>
        <begin position="77"/>
        <end position="79"/>
    </location>
</feature>
<feature type="strand" evidence="4">
    <location>
        <begin position="81"/>
        <end position="84"/>
    </location>
</feature>
<feature type="strand" evidence="4">
    <location>
        <begin position="89"/>
        <end position="95"/>
    </location>
</feature>
<feature type="strand" evidence="4">
    <location>
        <begin position="109"/>
        <end position="112"/>
    </location>
</feature>
<feature type="strand" evidence="4">
    <location>
        <begin position="115"/>
        <end position="121"/>
    </location>
</feature>
<feature type="turn" evidence="4">
    <location>
        <begin position="131"/>
        <end position="133"/>
    </location>
</feature>
<feature type="helix" evidence="4">
    <location>
        <begin position="136"/>
        <end position="142"/>
    </location>
</feature>
<feature type="strand" evidence="4">
    <location>
        <begin position="148"/>
        <end position="151"/>
    </location>
</feature>
<feature type="strand" evidence="4">
    <location>
        <begin position="156"/>
        <end position="164"/>
    </location>
</feature>
<feature type="helix" evidence="4">
    <location>
        <begin position="165"/>
        <end position="167"/>
    </location>
</feature>
<feature type="strand" evidence="4">
    <location>
        <begin position="169"/>
        <end position="176"/>
    </location>
</feature>
<feature type="turn" evidence="4">
    <location>
        <begin position="180"/>
        <end position="182"/>
    </location>
</feature>
<feature type="strand" evidence="4">
    <location>
        <begin position="189"/>
        <end position="200"/>
    </location>
</feature>
<feature type="strand" evidence="4">
    <location>
        <begin position="212"/>
        <end position="214"/>
    </location>
</feature>
<feature type="strand" evidence="5">
    <location>
        <begin position="227"/>
        <end position="229"/>
    </location>
</feature>
<feature type="strand" evidence="4">
    <location>
        <begin position="230"/>
        <end position="233"/>
    </location>
</feature>
<feature type="strand" evidence="4">
    <location>
        <begin position="235"/>
        <end position="237"/>
    </location>
</feature>
<feature type="strand" evidence="4">
    <location>
        <begin position="248"/>
        <end position="250"/>
    </location>
</feature>
<feature type="strand" evidence="4">
    <location>
        <begin position="252"/>
        <end position="254"/>
    </location>
</feature>
<feature type="strand" evidence="5">
    <location>
        <begin position="260"/>
        <end position="262"/>
    </location>
</feature>
<feature type="strand" evidence="4">
    <location>
        <begin position="268"/>
        <end position="271"/>
    </location>
</feature>
<feature type="strand" evidence="4">
    <location>
        <begin position="278"/>
        <end position="288"/>
    </location>
</feature>
<feature type="helix" evidence="4">
    <location>
        <begin position="291"/>
        <end position="326"/>
    </location>
</feature>
<evidence type="ECO:0000250" key="1"/>
<evidence type="ECO:0000255" key="2"/>
<evidence type="ECO:0000305" key="3"/>
<evidence type="ECO:0007829" key="4">
    <source>
        <dbReference type="PDB" id="7R0W"/>
    </source>
</evidence>
<evidence type="ECO:0007829" key="5">
    <source>
        <dbReference type="PDB" id="7ZXY"/>
    </source>
</evidence>